<accession>A9GFW6</accession>
<name>HUTH_SORC5</name>
<comment type="catalytic activity">
    <reaction evidence="1">
        <text>L-histidine = trans-urocanate + NH4(+)</text>
        <dbReference type="Rhea" id="RHEA:21232"/>
        <dbReference type="ChEBI" id="CHEBI:17771"/>
        <dbReference type="ChEBI" id="CHEBI:28938"/>
        <dbReference type="ChEBI" id="CHEBI:57595"/>
        <dbReference type="EC" id="4.3.1.3"/>
    </reaction>
</comment>
<comment type="pathway">
    <text evidence="1">Amino-acid degradation; L-histidine degradation into L-glutamate; N-formimidoyl-L-glutamate from L-histidine: step 1/3.</text>
</comment>
<comment type="subcellular location">
    <subcellularLocation>
        <location evidence="1">Cytoplasm</location>
    </subcellularLocation>
</comment>
<comment type="PTM">
    <text evidence="1">Contains an active site 4-methylidene-imidazol-5-one (MIO), which is formed autocatalytically by cyclization and dehydration of residues Ala-Ser-Gly.</text>
</comment>
<comment type="similarity">
    <text evidence="1">Belongs to the PAL/histidase family.</text>
</comment>
<proteinExistence type="inferred from homology"/>
<gene>
    <name evidence="1" type="primary">hutH</name>
    <name type="ordered locus">sce6082</name>
</gene>
<feature type="chain" id="PRO_0000336589" description="Histidine ammonia-lyase">
    <location>
        <begin position="1"/>
        <end position="514"/>
    </location>
</feature>
<feature type="modified residue" description="2,3-didehydroalanine (Ser)" evidence="1">
    <location>
        <position position="143"/>
    </location>
</feature>
<feature type="cross-link" description="5-imidazolinone (Ala-Gly)" evidence="1">
    <location>
        <begin position="142"/>
        <end position="144"/>
    </location>
</feature>
<reference key="1">
    <citation type="journal article" date="2007" name="Nat. Biotechnol.">
        <title>Complete genome sequence of the myxobacterium Sorangium cellulosum.</title>
        <authorList>
            <person name="Schneiker S."/>
            <person name="Perlova O."/>
            <person name="Kaiser O."/>
            <person name="Gerth K."/>
            <person name="Alici A."/>
            <person name="Altmeyer M.O."/>
            <person name="Bartels D."/>
            <person name="Bekel T."/>
            <person name="Beyer S."/>
            <person name="Bode E."/>
            <person name="Bode H.B."/>
            <person name="Bolten C.J."/>
            <person name="Choudhuri J.V."/>
            <person name="Doss S."/>
            <person name="Elnakady Y.A."/>
            <person name="Frank B."/>
            <person name="Gaigalat L."/>
            <person name="Goesmann A."/>
            <person name="Groeger C."/>
            <person name="Gross F."/>
            <person name="Jelsbak L."/>
            <person name="Jelsbak L."/>
            <person name="Kalinowski J."/>
            <person name="Kegler C."/>
            <person name="Knauber T."/>
            <person name="Konietzny S."/>
            <person name="Kopp M."/>
            <person name="Krause L."/>
            <person name="Krug D."/>
            <person name="Linke B."/>
            <person name="Mahmud T."/>
            <person name="Martinez-Arias R."/>
            <person name="McHardy A.C."/>
            <person name="Merai M."/>
            <person name="Meyer F."/>
            <person name="Mormann S."/>
            <person name="Munoz-Dorado J."/>
            <person name="Perez J."/>
            <person name="Pradella S."/>
            <person name="Rachid S."/>
            <person name="Raddatz G."/>
            <person name="Rosenau F."/>
            <person name="Rueckert C."/>
            <person name="Sasse F."/>
            <person name="Scharfe M."/>
            <person name="Schuster S.C."/>
            <person name="Suen G."/>
            <person name="Treuner-Lange A."/>
            <person name="Velicer G.J."/>
            <person name="Vorholter F.-J."/>
            <person name="Weissman K.J."/>
            <person name="Welch R.D."/>
            <person name="Wenzel S.C."/>
            <person name="Whitworth D.E."/>
            <person name="Wilhelm S."/>
            <person name="Wittmann C."/>
            <person name="Bloecker H."/>
            <person name="Puehler A."/>
            <person name="Mueller R."/>
        </authorList>
    </citation>
    <scope>NUCLEOTIDE SEQUENCE [LARGE SCALE GENOMIC DNA]</scope>
    <source>
        <strain>So ce56</strain>
    </source>
</reference>
<dbReference type="EC" id="4.3.1.3" evidence="1"/>
<dbReference type="EMBL" id="AM746676">
    <property type="protein sequence ID" value="CAN96246.1"/>
    <property type="molecule type" value="Genomic_DNA"/>
</dbReference>
<dbReference type="SMR" id="A9GFW6"/>
<dbReference type="STRING" id="448385.sce6082"/>
<dbReference type="KEGG" id="scl:sce6082"/>
<dbReference type="eggNOG" id="COG2986">
    <property type="taxonomic scope" value="Bacteria"/>
</dbReference>
<dbReference type="HOGENOM" id="CLU_014801_4_0_7"/>
<dbReference type="OrthoDB" id="9806955at2"/>
<dbReference type="BioCyc" id="SCEL448385:SCE_RS31225-MONOMER"/>
<dbReference type="UniPathway" id="UPA00379">
    <property type="reaction ID" value="UER00549"/>
</dbReference>
<dbReference type="Proteomes" id="UP000002139">
    <property type="component" value="Chromosome"/>
</dbReference>
<dbReference type="GO" id="GO:0005737">
    <property type="term" value="C:cytoplasm"/>
    <property type="evidence" value="ECO:0007669"/>
    <property type="project" value="UniProtKB-SubCell"/>
</dbReference>
<dbReference type="GO" id="GO:0004397">
    <property type="term" value="F:histidine ammonia-lyase activity"/>
    <property type="evidence" value="ECO:0007669"/>
    <property type="project" value="UniProtKB-UniRule"/>
</dbReference>
<dbReference type="GO" id="GO:0019556">
    <property type="term" value="P:L-histidine catabolic process to glutamate and formamide"/>
    <property type="evidence" value="ECO:0007669"/>
    <property type="project" value="UniProtKB-UniPathway"/>
</dbReference>
<dbReference type="GO" id="GO:0019557">
    <property type="term" value="P:L-histidine catabolic process to glutamate and formate"/>
    <property type="evidence" value="ECO:0007669"/>
    <property type="project" value="UniProtKB-UniPathway"/>
</dbReference>
<dbReference type="CDD" id="cd00332">
    <property type="entry name" value="PAL-HAL"/>
    <property type="match status" value="1"/>
</dbReference>
<dbReference type="FunFam" id="1.10.275.10:FF:000005">
    <property type="entry name" value="Histidine ammonia-lyase"/>
    <property type="match status" value="1"/>
</dbReference>
<dbReference type="FunFam" id="1.20.200.10:FF:000003">
    <property type="entry name" value="Histidine ammonia-lyase"/>
    <property type="match status" value="1"/>
</dbReference>
<dbReference type="Gene3D" id="1.20.200.10">
    <property type="entry name" value="Fumarase/aspartase (Central domain)"/>
    <property type="match status" value="1"/>
</dbReference>
<dbReference type="Gene3D" id="1.10.275.10">
    <property type="entry name" value="Fumarase/aspartase (N-terminal domain)"/>
    <property type="match status" value="1"/>
</dbReference>
<dbReference type="HAMAP" id="MF_00229">
    <property type="entry name" value="His_ammonia_lyase"/>
    <property type="match status" value="1"/>
</dbReference>
<dbReference type="InterPro" id="IPR001106">
    <property type="entry name" value="Aromatic_Lyase"/>
</dbReference>
<dbReference type="InterPro" id="IPR024083">
    <property type="entry name" value="Fumarase/histidase_N"/>
</dbReference>
<dbReference type="InterPro" id="IPR005921">
    <property type="entry name" value="HutH"/>
</dbReference>
<dbReference type="InterPro" id="IPR008948">
    <property type="entry name" value="L-Aspartase-like"/>
</dbReference>
<dbReference type="InterPro" id="IPR022313">
    <property type="entry name" value="Phe/His_NH3-lyase_AS"/>
</dbReference>
<dbReference type="NCBIfam" id="TIGR01225">
    <property type="entry name" value="hutH"/>
    <property type="match status" value="1"/>
</dbReference>
<dbReference type="NCBIfam" id="NF006871">
    <property type="entry name" value="PRK09367.1"/>
    <property type="match status" value="1"/>
</dbReference>
<dbReference type="PANTHER" id="PTHR10362">
    <property type="entry name" value="HISTIDINE AMMONIA-LYASE"/>
    <property type="match status" value="1"/>
</dbReference>
<dbReference type="Pfam" id="PF00221">
    <property type="entry name" value="Lyase_aromatic"/>
    <property type="match status" value="1"/>
</dbReference>
<dbReference type="SUPFAM" id="SSF48557">
    <property type="entry name" value="L-aspartase-like"/>
    <property type="match status" value="1"/>
</dbReference>
<dbReference type="PROSITE" id="PS00488">
    <property type="entry name" value="PAL_HISTIDASE"/>
    <property type="match status" value="1"/>
</dbReference>
<evidence type="ECO:0000255" key="1">
    <source>
        <dbReference type="HAMAP-Rule" id="MF_00229"/>
    </source>
</evidence>
<protein>
    <recommendedName>
        <fullName evidence="1">Histidine ammonia-lyase</fullName>
        <shortName evidence="1">Histidase</shortName>
        <ecNumber evidence="1">4.3.1.3</ecNumber>
    </recommendedName>
</protein>
<organism>
    <name type="scientific">Sorangium cellulosum (strain So ce56)</name>
    <name type="common">Polyangium cellulosum (strain So ce56)</name>
    <dbReference type="NCBI Taxonomy" id="448385"/>
    <lineage>
        <taxon>Bacteria</taxon>
        <taxon>Pseudomonadati</taxon>
        <taxon>Myxococcota</taxon>
        <taxon>Polyangia</taxon>
        <taxon>Polyangiales</taxon>
        <taxon>Polyangiaceae</taxon>
        <taxon>Sorangium</taxon>
    </lineage>
</organism>
<keyword id="KW-0963">Cytoplasm</keyword>
<keyword id="KW-0369">Histidine metabolism</keyword>
<keyword id="KW-0456">Lyase</keyword>
<keyword id="KW-1185">Reference proteome</keyword>
<sequence length="514" mass="53059">MLLGRPLSLADLEEIARRGRPVAICAEARERAAASRRAIDAIAAAGDAAPAVYGINTGFGALAETRIADHDIRALQRNLVRSHACGVGPELGEAEVRAMIVLRAQVIALGHSGVRTEVLDLLAALLERRVSPRIPAQGSVGASGDLAPLAHLALTLIGEGEARFEGQLLPSAVALAKAGLAPIELAAKEGLALINGTQYMTALGALALRDAAALCTVADIAGAVSLEALMGSKRPFDERLMRVRPHPGQAGTAGNLRALLGGSEIMQSHADCPRVQDAYSLRCMPQVHGATRDAVAWAAEVLTREVNSVTDNPTVFLGDGADGGAELISGGNFHGQPVALALDLAAMAAAELANISERRVEQLVNPALSTGLTPFLAPHSGLHSGFMIAQVASASLVSENKVLCHPASVDSIPSSAGREDHVSMGSISARKLAQVIENVRSSLAIELITAAQGVDQRLPLRPSAGVAAAHAAIRRVVPGLTEDRPLYRDIAAAAELIQSGALIAAVEEAVGPLN</sequence>